<feature type="chain" id="PRO_1000144340" description="Large ribosomal subunit protein uL14">
    <location>
        <begin position="1"/>
        <end position="122"/>
    </location>
</feature>
<proteinExistence type="inferred from homology"/>
<gene>
    <name evidence="1" type="primary">rplN</name>
    <name evidence="1" type="synonym">rpl14</name>
    <name type="ordered locus">SYNPCC7002_A1055</name>
</gene>
<name>RL14_PICP2</name>
<organism>
    <name type="scientific">Picosynechococcus sp. (strain ATCC 27264 / PCC 7002 / PR-6)</name>
    <name type="common">Agmenellum quadruplicatum</name>
    <dbReference type="NCBI Taxonomy" id="32049"/>
    <lineage>
        <taxon>Bacteria</taxon>
        <taxon>Bacillati</taxon>
        <taxon>Cyanobacteriota</taxon>
        <taxon>Cyanophyceae</taxon>
        <taxon>Oscillatoriophycideae</taxon>
        <taxon>Chroococcales</taxon>
        <taxon>Geminocystaceae</taxon>
        <taxon>Picosynechococcus</taxon>
    </lineage>
</organism>
<keyword id="KW-1185">Reference proteome</keyword>
<keyword id="KW-0687">Ribonucleoprotein</keyword>
<keyword id="KW-0689">Ribosomal protein</keyword>
<keyword id="KW-0694">RNA-binding</keyword>
<keyword id="KW-0699">rRNA-binding</keyword>
<comment type="function">
    <text evidence="1">Binds to 23S rRNA. Forms part of two intersubunit bridges in the 70S ribosome.</text>
</comment>
<comment type="subunit">
    <text evidence="1">Part of the 50S ribosomal subunit. Forms a cluster with proteins L3 and L19. In the 70S ribosome, L14 and L19 interact and together make contacts with the 16S rRNA in bridges B5 and B8.</text>
</comment>
<comment type="similarity">
    <text evidence="1">Belongs to the universal ribosomal protein uL14 family.</text>
</comment>
<accession>B1XJS9</accession>
<evidence type="ECO:0000255" key="1">
    <source>
        <dbReference type="HAMAP-Rule" id="MF_01367"/>
    </source>
</evidence>
<evidence type="ECO:0000305" key="2"/>
<protein>
    <recommendedName>
        <fullName evidence="1">Large ribosomal subunit protein uL14</fullName>
    </recommendedName>
    <alternativeName>
        <fullName evidence="2">50S ribosomal protein L14</fullName>
    </alternativeName>
</protein>
<dbReference type="EMBL" id="CP000951">
    <property type="protein sequence ID" value="ACA99057.1"/>
    <property type="molecule type" value="Genomic_DNA"/>
</dbReference>
<dbReference type="RefSeq" id="WP_012306680.1">
    <property type="nucleotide sequence ID" value="NZ_JAHHPU010000001.1"/>
</dbReference>
<dbReference type="SMR" id="B1XJS9"/>
<dbReference type="STRING" id="32049.SYNPCC7002_A1055"/>
<dbReference type="KEGG" id="syp:SYNPCC7002_A1055"/>
<dbReference type="eggNOG" id="COG0093">
    <property type="taxonomic scope" value="Bacteria"/>
</dbReference>
<dbReference type="HOGENOM" id="CLU_095071_2_1_3"/>
<dbReference type="Proteomes" id="UP000001688">
    <property type="component" value="Chromosome"/>
</dbReference>
<dbReference type="GO" id="GO:0022625">
    <property type="term" value="C:cytosolic large ribosomal subunit"/>
    <property type="evidence" value="ECO:0007669"/>
    <property type="project" value="TreeGrafter"/>
</dbReference>
<dbReference type="GO" id="GO:0070180">
    <property type="term" value="F:large ribosomal subunit rRNA binding"/>
    <property type="evidence" value="ECO:0007669"/>
    <property type="project" value="TreeGrafter"/>
</dbReference>
<dbReference type="GO" id="GO:0003735">
    <property type="term" value="F:structural constituent of ribosome"/>
    <property type="evidence" value="ECO:0007669"/>
    <property type="project" value="InterPro"/>
</dbReference>
<dbReference type="GO" id="GO:0006412">
    <property type="term" value="P:translation"/>
    <property type="evidence" value="ECO:0007669"/>
    <property type="project" value="UniProtKB-UniRule"/>
</dbReference>
<dbReference type="CDD" id="cd00337">
    <property type="entry name" value="Ribosomal_uL14"/>
    <property type="match status" value="1"/>
</dbReference>
<dbReference type="FunFam" id="2.40.150.20:FF:000001">
    <property type="entry name" value="50S ribosomal protein L14"/>
    <property type="match status" value="1"/>
</dbReference>
<dbReference type="Gene3D" id="2.40.150.20">
    <property type="entry name" value="Ribosomal protein L14"/>
    <property type="match status" value="1"/>
</dbReference>
<dbReference type="HAMAP" id="MF_01367">
    <property type="entry name" value="Ribosomal_uL14"/>
    <property type="match status" value="1"/>
</dbReference>
<dbReference type="InterPro" id="IPR000218">
    <property type="entry name" value="Ribosomal_uL14"/>
</dbReference>
<dbReference type="InterPro" id="IPR005745">
    <property type="entry name" value="Ribosomal_uL14_bac-type"/>
</dbReference>
<dbReference type="InterPro" id="IPR019972">
    <property type="entry name" value="Ribosomal_uL14_CS"/>
</dbReference>
<dbReference type="InterPro" id="IPR036853">
    <property type="entry name" value="Ribosomal_uL14_sf"/>
</dbReference>
<dbReference type="NCBIfam" id="TIGR01067">
    <property type="entry name" value="rplN_bact"/>
    <property type="match status" value="1"/>
</dbReference>
<dbReference type="PANTHER" id="PTHR11761">
    <property type="entry name" value="50S/60S RIBOSOMAL PROTEIN L14/L23"/>
    <property type="match status" value="1"/>
</dbReference>
<dbReference type="PANTHER" id="PTHR11761:SF3">
    <property type="entry name" value="LARGE RIBOSOMAL SUBUNIT PROTEIN UL14M"/>
    <property type="match status" value="1"/>
</dbReference>
<dbReference type="Pfam" id="PF00238">
    <property type="entry name" value="Ribosomal_L14"/>
    <property type="match status" value="1"/>
</dbReference>
<dbReference type="SMART" id="SM01374">
    <property type="entry name" value="Ribosomal_L14"/>
    <property type="match status" value="1"/>
</dbReference>
<dbReference type="SUPFAM" id="SSF50193">
    <property type="entry name" value="Ribosomal protein L14"/>
    <property type="match status" value="1"/>
</dbReference>
<dbReference type="PROSITE" id="PS00049">
    <property type="entry name" value="RIBOSOMAL_L14"/>
    <property type="match status" value="1"/>
</dbReference>
<sequence>MIQQQTYLNVADNSGARKLMCLRVLSTGNCRYGGIGDQIIAVVKEAIPNMGVKKSDVVRAVIVRTRQPLRRASGMSIRFDDNAAVIINAEGNPKGTRVFGPVARELRDKNFTKIVSLAPEVI</sequence>
<reference key="1">
    <citation type="submission" date="2008-02" db="EMBL/GenBank/DDBJ databases">
        <title>Complete sequence of Synechococcus sp. PCC 7002.</title>
        <authorList>
            <person name="Li T."/>
            <person name="Zhao J."/>
            <person name="Zhao C."/>
            <person name="Liu Z."/>
            <person name="Zhao F."/>
            <person name="Marquardt J."/>
            <person name="Nomura C.T."/>
            <person name="Persson S."/>
            <person name="Detter J.C."/>
            <person name="Richardson P.M."/>
            <person name="Lanz C."/>
            <person name="Schuster S.C."/>
            <person name="Wang J."/>
            <person name="Li S."/>
            <person name="Huang X."/>
            <person name="Cai T."/>
            <person name="Yu Z."/>
            <person name="Luo J."/>
            <person name="Zhao J."/>
            <person name="Bryant D.A."/>
        </authorList>
    </citation>
    <scope>NUCLEOTIDE SEQUENCE [LARGE SCALE GENOMIC DNA]</scope>
    <source>
        <strain>ATCC 27264 / PCC 7002 / PR-6</strain>
    </source>
</reference>